<evidence type="ECO:0000255" key="1">
    <source>
        <dbReference type="HAMAP-Rule" id="MF_00317"/>
    </source>
</evidence>
<keyword id="KW-0235">DNA replication</keyword>
<keyword id="KW-0238">DNA-binding</keyword>
<keyword id="KW-1185">Reference proteome</keyword>
<gene>
    <name evidence="1" type="primary">pcn</name>
    <name type="ordered locus">Mthe_1027</name>
</gene>
<reference key="1">
    <citation type="submission" date="2006-10" db="EMBL/GenBank/DDBJ databases">
        <title>Complete sequence of Methanosaeta thermophila PT.</title>
        <authorList>
            <consortium name="US DOE Joint Genome Institute"/>
            <person name="Copeland A."/>
            <person name="Lucas S."/>
            <person name="Lapidus A."/>
            <person name="Barry K."/>
            <person name="Detter J.C."/>
            <person name="Glavina del Rio T."/>
            <person name="Hammon N."/>
            <person name="Israni S."/>
            <person name="Pitluck S."/>
            <person name="Chain P."/>
            <person name="Malfatti S."/>
            <person name="Shin M."/>
            <person name="Vergez L."/>
            <person name="Schmutz J."/>
            <person name="Larimer F."/>
            <person name="Land M."/>
            <person name="Hauser L."/>
            <person name="Kyrpides N."/>
            <person name="Kim E."/>
            <person name="Smith K.S."/>
            <person name="Ingram-Smith C."/>
            <person name="Richardson P."/>
        </authorList>
    </citation>
    <scope>NUCLEOTIDE SEQUENCE [LARGE SCALE GENOMIC DNA]</scope>
    <source>
        <strain>DSM 6194 / JCM 14653 / NBRC 101360 / PT</strain>
    </source>
</reference>
<organism>
    <name type="scientific">Methanothrix thermoacetophila (strain DSM 6194 / JCM 14653 / NBRC 101360 / PT)</name>
    <name type="common">Methanosaeta thermophila</name>
    <dbReference type="NCBI Taxonomy" id="349307"/>
    <lineage>
        <taxon>Archaea</taxon>
        <taxon>Methanobacteriati</taxon>
        <taxon>Methanobacteriota</taxon>
        <taxon>Stenosarchaea group</taxon>
        <taxon>Methanomicrobia</taxon>
        <taxon>Methanotrichales</taxon>
        <taxon>Methanotrichaceae</taxon>
        <taxon>Methanothrix</taxon>
    </lineage>
</organism>
<protein>
    <recommendedName>
        <fullName evidence="1">DNA polymerase sliding clamp</fullName>
    </recommendedName>
    <alternativeName>
        <fullName evidence="1">Proliferating cell nuclear antigen homolog</fullName>
        <shortName evidence="1">PCNA</shortName>
    </alternativeName>
</protein>
<sequence>MLKAVIDAETLRDAIEAVSSLVDEVKFTITEKGLELKAVDPANVAMVSLKIDASAFEFYQATPGEIGVDLVRLSDLLSMADRGERVRLELLEDERKLRIGVGSLSYTLSLIDPSAIRKEPRIPELDLPAHVAIPGAEFRRAIKAAEKVSDHVVLGVKDDIFYMEAKGDIDALKLTMRSSELLDMKPGEARSLFSLDYLSDMSKSIGKAPEVKLEIGIDYPLRISFMLKDNVHVSYLLAPRIEQE</sequence>
<feature type="chain" id="PRO_1000019176" description="DNA polymerase sliding clamp">
    <location>
        <begin position="1"/>
        <end position="244"/>
    </location>
</feature>
<comment type="function">
    <text evidence="1">Sliding clamp subunit that acts as a moving platform for DNA processing. Responsible for tethering the catalytic subunit of DNA polymerase and other proteins to DNA during high-speed replication.</text>
</comment>
<comment type="subunit">
    <text evidence="1">Homotrimer. The subunits circularize to form a toroid; DNA passes through its center. Replication factor C (RFC) is required to load the toroid on the DNA.</text>
</comment>
<comment type="similarity">
    <text evidence="1">Belongs to the PCNA family.</text>
</comment>
<name>PCNA_METTP</name>
<accession>A0B7Y8</accession>
<dbReference type="EMBL" id="CP000477">
    <property type="protein sequence ID" value="ABK14812.1"/>
    <property type="molecule type" value="Genomic_DNA"/>
</dbReference>
<dbReference type="RefSeq" id="WP_011696205.1">
    <property type="nucleotide sequence ID" value="NC_008553.1"/>
</dbReference>
<dbReference type="SMR" id="A0B7Y8"/>
<dbReference type="STRING" id="349307.Mthe_1027"/>
<dbReference type="GeneID" id="4462776"/>
<dbReference type="KEGG" id="mtp:Mthe_1027"/>
<dbReference type="HOGENOM" id="CLU_043978_1_1_2"/>
<dbReference type="OrthoDB" id="14749at2157"/>
<dbReference type="Proteomes" id="UP000000674">
    <property type="component" value="Chromosome"/>
</dbReference>
<dbReference type="GO" id="GO:0003677">
    <property type="term" value="F:DNA binding"/>
    <property type="evidence" value="ECO:0007669"/>
    <property type="project" value="UniProtKB-UniRule"/>
</dbReference>
<dbReference type="GO" id="GO:0030337">
    <property type="term" value="F:DNA polymerase processivity factor activity"/>
    <property type="evidence" value="ECO:0007669"/>
    <property type="project" value="UniProtKB-UniRule"/>
</dbReference>
<dbReference type="GO" id="GO:0006272">
    <property type="term" value="P:leading strand elongation"/>
    <property type="evidence" value="ECO:0007669"/>
    <property type="project" value="TreeGrafter"/>
</dbReference>
<dbReference type="GO" id="GO:0006275">
    <property type="term" value="P:regulation of DNA replication"/>
    <property type="evidence" value="ECO:0007669"/>
    <property type="project" value="UniProtKB-UniRule"/>
</dbReference>
<dbReference type="CDD" id="cd00577">
    <property type="entry name" value="PCNA"/>
    <property type="match status" value="1"/>
</dbReference>
<dbReference type="Gene3D" id="3.70.10.10">
    <property type="match status" value="1"/>
</dbReference>
<dbReference type="HAMAP" id="MF_00317">
    <property type="entry name" value="DNApol_clamp_arch"/>
    <property type="match status" value="1"/>
</dbReference>
<dbReference type="InterPro" id="IPR046938">
    <property type="entry name" value="DNA_clamp_sf"/>
</dbReference>
<dbReference type="InterPro" id="IPR000730">
    <property type="entry name" value="Pr_cel_nuc_antig"/>
</dbReference>
<dbReference type="InterPro" id="IPR022649">
    <property type="entry name" value="Pr_cel_nuc_antig_C"/>
</dbReference>
<dbReference type="InterPro" id="IPR022659">
    <property type="entry name" value="Pr_cel_nuc_antig_CS"/>
</dbReference>
<dbReference type="InterPro" id="IPR022648">
    <property type="entry name" value="Pr_cel_nuc_antig_N"/>
</dbReference>
<dbReference type="NCBIfam" id="NF002222">
    <property type="entry name" value="PRK01115.1-5"/>
    <property type="match status" value="1"/>
</dbReference>
<dbReference type="PANTHER" id="PTHR11352">
    <property type="entry name" value="PROLIFERATING CELL NUCLEAR ANTIGEN"/>
    <property type="match status" value="1"/>
</dbReference>
<dbReference type="PANTHER" id="PTHR11352:SF0">
    <property type="entry name" value="PROLIFERATING CELL NUCLEAR ANTIGEN"/>
    <property type="match status" value="1"/>
</dbReference>
<dbReference type="Pfam" id="PF02747">
    <property type="entry name" value="PCNA_C"/>
    <property type="match status" value="1"/>
</dbReference>
<dbReference type="Pfam" id="PF00705">
    <property type="entry name" value="PCNA_N"/>
    <property type="match status" value="1"/>
</dbReference>
<dbReference type="PRINTS" id="PR00339">
    <property type="entry name" value="PCNACYCLIN"/>
</dbReference>
<dbReference type="SUPFAM" id="SSF55979">
    <property type="entry name" value="DNA clamp"/>
    <property type="match status" value="2"/>
</dbReference>
<dbReference type="PROSITE" id="PS01251">
    <property type="entry name" value="PCNA_1"/>
    <property type="match status" value="1"/>
</dbReference>
<proteinExistence type="inferred from homology"/>